<name>UPPP_SALRD</name>
<gene>
    <name evidence="1" type="primary">uppP</name>
    <name type="ordered locus">SRU_0337</name>
</gene>
<sequence>MTWWEALLLGLIQGLTEFIPVSSSGHLVLGQYLLGLDKEAADVTFEVFVHFGTVLSILTVYWDDVAELVEEAWAGLRAPRAVPTRFAENDTFRLGVFILVTLVPTGVAYVLFREPLEQAFGSPRFTSAMLVGTGVLLLLTRIGPRPDGDLSGVKAFVVGVAQSCALVPGISRSGATICTALYQNVAPERAANFSFLMLLPVVLGGTVLKGLELMEQGVGAAGLSLGIGTVAAYGSGIGAIYVVLDVVRRGNLQYFAYYCFLIGGLGLWLL</sequence>
<protein>
    <recommendedName>
        <fullName evidence="1">Undecaprenyl-diphosphatase</fullName>
        <ecNumber evidence="1">3.6.1.27</ecNumber>
    </recommendedName>
    <alternativeName>
        <fullName evidence="1">Bacitracin resistance protein</fullName>
    </alternativeName>
    <alternativeName>
        <fullName evidence="1">Undecaprenyl pyrophosphate phosphatase</fullName>
    </alternativeName>
</protein>
<reference key="1">
    <citation type="journal article" date="2005" name="Proc. Natl. Acad. Sci. U.S.A.">
        <title>The genome of Salinibacter ruber: convergence and gene exchange among hyperhalophilic bacteria and archaea.</title>
        <authorList>
            <person name="Mongodin E.F."/>
            <person name="Nelson K.E."/>
            <person name="Daugherty S."/>
            <person name="DeBoy R.T."/>
            <person name="Wister J."/>
            <person name="Khouri H."/>
            <person name="Weidman J."/>
            <person name="Walsh D.A."/>
            <person name="Papke R.T."/>
            <person name="Sanchez Perez G."/>
            <person name="Sharma A.K."/>
            <person name="Nesbo C.L."/>
            <person name="MacLeod D."/>
            <person name="Bapteste E."/>
            <person name="Doolittle W.F."/>
            <person name="Charlebois R.L."/>
            <person name="Legault B."/>
            <person name="Rodriguez-Valera F."/>
        </authorList>
    </citation>
    <scope>NUCLEOTIDE SEQUENCE [LARGE SCALE GENOMIC DNA]</scope>
    <source>
        <strain>DSM 13855 / CECT 5946 / M31</strain>
    </source>
</reference>
<accession>Q2S5P8</accession>
<comment type="function">
    <text evidence="1">Catalyzes the dephosphorylation of undecaprenyl diphosphate (UPP). Confers resistance to bacitracin.</text>
</comment>
<comment type="catalytic activity">
    <reaction evidence="1">
        <text>di-trans,octa-cis-undecaprenyl diphosphate + H2O = di-trans,octa-cis-undecaprenyl phosphate + phosphate + H(+)</text>
        <dbReference type="Rhea" id="RHEA:28094"/>
        <dbReference type="ChEBI" id="CHEBI:15377"/>
        <dbReference type="ChEBI" id="CHEBI:15378"/>
        <dbReference type="ChEBI" id="CHEBI:43474"/>
        <dbReference type="ChEBI" id="CHEBI:58405"/>
        <dbReference type="ChEBI" id="CHEBI:60392"/>
        <dbReference type="EC" id="3.6.1.27"/>
    </reaction>
</comment>
<comment type="subcellular location">
    <subcellularLocation>
        <location evidence="1">Cell inner membrane</location>
        <topology evidence="1">Multi-pass membrane protein</topology>
    </subcellularLocation>
</comment>
<comment type="miscellaneous">
    <text>Bacitracin is thought to be involved in the inhibition of peptidoglycan synthesis by sequestering undecaprenyl diphosphate, thereby reducing the pool of lipid carrier available.</text>
</comment>
<comment type="similarity">
    <text evidence="1">Belongs to the UppP family.</text>
</comment>
<organism>
    <name type="scientific">Salinibacter ruber (strain DSM 13855 / M31)</name>
    <dbReference type="NCBI Taxonomy" id="309807"/>
    <lineage>
        <taxon>Bacteria</taxon>
        <taxon>Pseudomonadati</taxon>
        <taxon>Rhodothermota</taxon>
        <taxon>Rhodothermia</taxon>
        <taxon>Rhodothermales</taxon>
        <taxon>Salinibacteraceae</taxon>
        <taxon>Salinibacter</taxon>
    </lineage>
</organism>
<evidence type="ECO:0000255" key="1">
    <source>
        <dbReference type="HAMAP-Rule" id="MF_01006"/>
    </source>
</evidence>
<feature type="chain" id="PRO_0000250263" description="Undecaprenyl-diphosphatase">
    <location>
        <begin position="1"/>
        <end position="270"/>
    </location>
</feature>
<feature type="transmembrane region" description="Helical" evidence="1">
    <location>
        <begin position="1"/>
        <end position="21"/>
    </location>
</feature>
<feature type="transmembrane region" description="Helical" evidence="1">
    <location>
        <begin position="92"/>
        <end position="112"/>
    </location>
</feature>
<feature type="transmembrane region" description="Helical" evidence="1">
    <location>
        <begin position="119"/>
        <end position="139"/>
    </location>
</feature>
<feature type="transmembrane region" description="Helical" evidence="1">
    <location>
        <begin position="150"/>
        <end position="170"/>
    </location>
</feature>
<feature type="transmembrane region" description="Helical" evidence="1">
    <location>
        <begin position="193"/>
        <end position="213"/>
    </location>
</feature>
<feature type="transmembrane region" description="Helical" evidence="1">
    <location>
        <begin position="223"/>
        <end position="243"/>
    </location>
</feature>
<feature type="transmembrane region" description="Helical" evidence="1">
    <location>
        <begin position="250"/>
        <end position="270"/>
    </location>
</feature>
<dbReference type="EC" id="3.6.1.27" evidence="1"/>
<dbReference type="EMBL" id="CP000159">
    <property type="protein sequence ID" value="ABC44894.1"/>
    <property type="molecule type" value="Genomic_DNA"/>
</dbReference>
<dbReference type="RefSeq" id="WP_011403116.1">
    <property type="nucleotide sequence ID" value="NC_007677.1"/>
</dbReference>
<dbReference type="RefSeq" id="YP_444483.1">
    <property type="nucleotide sequence ID" value="NC_007677.1"/>
</dbReference>
<dbReference type="SMR" id="Q2S5P8"/>
<dbReference type="STRING" id="309807.SRU_0337"/>
<dbReference type="EnsemblBacteria" id="ABC44894">
    <property type="protein sequence ID" value="ABC44894"/>
    <property type="gene ID" value="SRU_0337"/>
</dbReference>
<dbReference type="GeneID" id="83727260"/>
<dbReference type="KEGG" id="sru:SRU_0337"/>
<dbReference type="PATRIC" id="fig|309807.25.peg.350"/>
<dbReference type="eggNOG" id="COG1968">
    <property type="taxonomic scope" value="Bacteria"/>
</dbReference>
<dbReference type="HOGENOM" id="CLU_060296_1_0_10"/>
<dbReference type="OrthoDB" id="9808289at2"/>
<dbReference type="Proteomes" id="UP000008674">
    <property type="component" value="Chromosome"/>
</dbReference>
<dbReference type="GO" id="GO:0005886">
    <property type="term" value="C:plasma membrane"/>
    <property type="evidence" value="ECO:0007669"/>
    <property type="project" value="UniProtKB-SubCell"/>
</dbReference>
<dbReference type="GO" id="GO:0050380">
    <property type="term" value="F:undecaprenyl-diphosphatase activity"/>
    <property type="evidence" value="ECO:0007669"/>
    <property type="project" value="UniProtKB-UniRule"/>
</dbReference>
<dbReference type="GO" id="GO:0071555">
    <property type="term" value="P:cell wall organization"/>
    <property type="evidence" value="ECO:0007669"/>
    <property type="project" value="UniProtKB-KW"/>
</dbReference>
<dbReference type="GO" id="GO:0009252">
    <property type="term" value="P:peptidoglycan biosynthetic process"/>
    <property type="evidence" value="ECO:0007669"/>
    <property type="project" value="UniProtKB-KW"/>
</dbReference>
<dbReference type="GO" id="GO:0008360">
    <property type="term" value="P:regulation of cell shape"/>
    <property type="evidence" value="ECO:0007669"/>
    <property type="project" value="UniProtKB-KW"/>
</dbReference>
<dbReference type="GO" id="GO:0046677">
    <property type="term" value="P:response to antibiotic"/>
    <property type="evidence" value="ECO:0007669"/>
    <property type="project" value="UniProtKB-UniRule"/>
</dbReference>
<dbReference type="HAMAP" id="MF_01006">
    <property type="entry name" value="Undec_diphosphatase"/>
    <property type="match status" value="1"/>
</dbReference>
<dbReference type="InterPro" id="IPR003824">
    <property type="entry name" value="UppP"/>
</dbReference>
<dbReference type="PANTHER" id="PTHR30622">
    <property type="entry name" value="UNDECAPRENYL-DIPHOSPHATASE"/>
    <property type="match status" value="1"/>
</dbReference>
<dbReference type="PANTHER" id="PTHR30622:SF2">
    <property type="entry name" value="UNDECAPRENYL-DIPHOSPHATASE"/>
    <property type="match status" value="1"/>
</dbReference>
<dbReference type="Pfam" id="PF02673">
    <property type="entry name" value="BacA"/>
    <property type="match status" value="1"/>
</dbReference>
<proteinExistence type="inferred from homology"/>
<keyword id="KW-0046">Antibiotic resistance</keyword>
<keyword id="KW-0997">Cell inner membrane</keyword>
<keyword id="KW-1003">Cell membrane</keyword>
<keyword id="KW-0133">Cell shape</keyword>
<keyword id="KW-0961">Cell wall biogenesis/degradation</keyword>
<keyword id="KW-0378">Hydrolase</keyword>
<keyword id="KW-0472">Membrane</keyword>
<keyword id="KW-0573">Peptidoglycan synthesis</keyword>
<keyword id="KW-1185">Reference proteome</keyword>
<keyword id="KW-0812">Transmembrane</keyword>
<keyword id="KW-1133">Transmembrane helix</keyword>